<gene>
    <name type="primary">nifE</name>
</gene>
<name>NIFE_KLEPN</name>
<dbReference type="EMBL" id="X13303">
    <property type="protein sequence ID" value="CAA31671.1"/>
    <property type="molecule type" value="Genomic_DNA"/>
</dbReference>
<dbReference type="EMBL" id="X07294">
    <property type="protein sequence ID" value="CAA30272.1"/>
    <property type="molecule type" value="Genomic_DNA"/>
</dbReference>
<dbReference type="PIR" id="S01839">
    <property type="entry name" value="S01839"/>
</dbReference>
<dbReference type="SMR" id="P08737"/>
<dbReference type="UniPathway" id="UPA00782"/>
<dbReference type="GO" id="GO:0016163">
    <property type="term" value="F:nitrogenase activity"/>
    <property type="evidence" value="ECO:0007669"/>
    <property type="project" value="InterPro"/>
</dbReference>
<dbReference type="GO" id="GO:0009399">
    <property type="term" value="P:nitrogen fixation"/>
    <property type="evidence" value="ECO:0007669"/>
    <property type="project" value="UniProtKB-KW"/>
</dbReference>
<dbReference type="GO" id="GO:0065003">
    <property type="term" value="P:protein-containing complex assembly"/>
    <property type="evidence" value="ECO:0007669"/>
    <property type="project" value="InterPro"/>
</dbReference>
<dbReference type="Gene3D" id="3.40.50.12380">
    <property type="entry name" value="Nitrogenase MoFe cofactor biosynthesis protein NifE, C-terminal"/>
    <property type="match status" value="1"/>
</dbReference>
<dbReference type="Gene3D" id="3.40.50.1980">
    <property type="entry name" value="Nitrogenase molybdenum iron protein domain"/>
    <property type="match status" value="1"/>
</dbReference>
<dbReference type="InterPro" id="IPR000510">
    <property type="entry name" value="Nase/OxRdtase_comp1"/>
</dbReference>
<dbReference type="InterPro" id="IPR000318">
    <property type="entry name" value="Nase_comp1_CS"/>
</dbReference>
<dbReference type="InterPro" id="IPR005973">
    <property type="entry name" value="NifE"/>
</dbReference>
<dbReference type="InterPro" id="IPR049939">
    <property type="entry name" value="NifE-like"/>
</dbReference>
<dbReference type="NCBIfam" id="TIGR01283">
    <property type="entry name" value="nifE"/>
    <property type="match status" value="1"/>
</dbReference>
<dbReference type="PANTHER" id="PTHR42956">
    <property type="entry name" value="NITROGENASE IRON-MOLYBDENUM COFACTOR BIOSYNTHESIS PROTEIN NIFE"/>
    <property type="match status" value="1"/>
</dbReference>
<dbReference type="PANTHER" id="PTHR42956:SF1">
    <property type="entry name" value="NITROGENASE IRON-MOLYBDENUM COFACTOR BIOSYNTHESIS PROTEIN NIFE"/>
    <property type="match status" value="1"/>
</dbReference>
<dbReference type="Pfam" id="PF00148">
    <property type="entry name" value="Oxidored_nitro"/>
    <property type="match status" value="1"/>
</dbReference>
<dbReference type="SUPFAM" id="SSF53807">
    <property type="entry name" value="Helical backbone' metal receptor"/>
    <property type="match status" value="1"/>
</dbReference>
<dbReference type="PROSITE" id="PS00699">
    <property type="entry name" value="NITROGENASE_1_1"/>
    <property type="match status" value="1"/>
</dbReference>
<dbReference type="PROSITE" id="PS00090">
    <property type="entry name" value="NITROGENASE_1_2"/>
    <property type="match status" value="1"/>
</dbReference>
<sequence>MKGNEILALLDEPACEHNHKQKSGCSAPKPGATAAGCAFDGAQITLLPIADVAHLVHGPIGCAGSSWDNRGSASSGPTLNRLGFTTDLNEQDVIMGRGERRLFHAVRHIVTRYHPAAVFIYNTCVPAMEGDDLEAVCQAAQTATGVPVIAIDAAGFYGSKNLGNRPAGDVMVKRVIGQREPAPWPESTLFAPEQRHDIGLIGEFNIAGEFWHIQPLLDELGIRVLGSLSGDGRFAEIQTMHRAQANMLVCSRALINVARALEQRYGTPWFEGSFYGIRATSDALRQLAALLGDDDLRQRTEALIAREEQAAELALQPWREQLRGRKALLYTGGVKSWSVVSALQDLGMTVVATGTRKSTEEDKQRIRELMGEEAVMLEEGNARTLLDVVYRYQADLMIAGGRNMYTAYKARLPFLDINQEREHAFAGYQGIVTLARQLCQTINSPIWPQTHSRAPWR</sequence>
<protein>
    <recommendedName>
        <fullName>Nitrogenase iron-molybdenum cofactor biosynthesis protein NifE</fullName>
    </recommendedName>
</protein>
<evidence type="ECO:0000305" key="1"/>
<organism>
    <name type="scientific">Klebsiella pneumoniae</name>
    <dbReference type="NCBI Taxonomy" id="573"/>
    <lineage>
        <taxon>Bacteria</taxon>
        <taxon>Pseudomonadati</taxon>
        <taxon>Pseudomonadota</taxon>
        <taxon>Gammaproteobacteria</taxon>
        <taxon>Enterobacterales</taxon>
        <taxon>Enterobacteriaceae</taxon>
        <taxon>Klebsiella/Raoultella group</taxon>
        <taxon>Klebsiella</taxon>
        <taxon>Klebsiella pneumoniae complex</taxon>
    </lineage>
</organism>
<keyword id="KW-0535">Nitrogen fixation</keyword>
<comment type="function">
    <text>This protein may play a role in the biosynthesis of the prosthetic group of nitrogenase (FeMo cofactor).</text>
</comment>
<comment type="pathway">
    <text>Cofactor biosynthesis; Fe-Mo cofactor biosynthesis.</text>
</comment>
<comment type="similarity">
    <text evidence="1">Belongs to the NifD/NifK/NifE/NifN family.</text>
</comment>
<proteinExistence type="inferred from homology"/>
<reference key="1">
    <citation type="journal article" date="1988" name="J. Mol. Biol.">
        <title>Nucleotide sequence of a 24,206-base-pair DNA fragment carrying the entire nitrogen fixation gene cluster of Klebsiella pneumoniae.</title>
        <authorList>
            <person name="Arnold W."/>
            <person name="Rump A."/>
            <person name="Klipp W."/>
            <person name="Priefer U.B."/>
            <person name="Puehler A."/>
        </authorList>
    </citation>
    <scope>NUCLEOTIDE SEQUENCE [GENOMIC DNA]</scope>
</reference>
<reference key="2">
    <citation type="journal article" date="1988" name="Nucleic Acids Res.">
        <title>Nucleotide sequence of the nifE and nifN genes from Klebsiella pneumoniae.</title>
        <authorList>
            <person name="Setterquist R.A."/>
            <person name="Brigle K.E."/>
            <person name="Beynon J."/>
            <person name="Cannon M."/>
            <person name="Ally A."/>
            <person name="Cannon F."/>
            <person name="Dean D.R."/>
        </authorList>
    </citation>
    <scope>NUCLEOTIDE SEQUENCE [GENOMIC DNA]</scope>
</reference>
<feature type="chain" id="PRO_0000153115" description="Nitrogenase iron-molybdenum cofactor biosynthesis protein NifE">
    <location>
        <begin position="1"/>
        <end position="457"/>
    </location>
</feature>
<feature type="sequence conflict" description="In Ref. 2; CAA30272." evidence="1" ref="2">
    <original>P</original>
    <variation>L</variation>
    <location>
        <position position="166"/>
    </location>
</feature>
<feature type="sequence conflict" description="In Ref. 2; CAA30272." evidence="1" ref="2">
    <original>G</original>
    <variation>A</variation>
    <location>
        <position position="333"/>
    </location>
</feature>
<accession>P08737</accession>